<sequence>MRILPSPGMPALLSLVSLLSVLLMGCVAESPPVFIKKPVDQIGVSGGVASFVCQATGDPKPRVTWNKKGKKVNSQRFETIEFDESAGAVLRIQPLRTPRDENIYECVAQNPHGEVTVHAKLTVLREDQLPPGFPNIDMGPQLKVVERTRTATMLCAASGNPDPEITWFKDFLPVDPSTSNGRIKQLRSGGLQIESSEETDQGKYECVASNSAGVRYSSPANLYVRELREVRRVAPRFSILPVSHEIMPGGNVNITCVAVGSPMPYVKWMQGAEDLTPEDDMPVGRNVLELTDVKDSANYTCVAMSSLGVIEAVAQITVKSLPKAPGTPVVTETTATSITITWDSGNPDPVSYYVIEYKSKSQDGPYQIKEDITTTRYSIGGLSPNSEYEIWVSAVNSIGQGPPSESVVTRTGEQAPASAPRNVQGRMLSSTTMIIQWEEPVEPNGQIRGYRVYYTMEPDQPVSNWQKHNVDDSLLTTVGSLLEDETYTVRVLAFTSVGDGPLSDPIQVKTQQGVPGQPMNFRAEAKTETSIVLSWSPPRQEIIVKYELLFKEGDHGREVPRNFEPTTSFTVEGLKPNTEYVFRLAARSALGLGAFTPEVRERTLQSILPKNFKVKMVTKTSVLLSWEFPENYNSPTPYKIQYNGLNVDVDGRTTKKLITNLKPHTFYNFVLMNRGNSMGGLQQNVAAWTAANMLSRKPEVTHKPDADGNVVVILPDVKSSVAVQAYYIVVVPLRKSRGGQFLNPLGSPEEMDLEELIQDIARLRRRSLRHSRQLDFPKPYIAARFRSLPNHFVLGDMKHYDNFENRALEPGQRYVIFILAVLQEPEATFAASPFSDPIQLDNPDPQPIIDGEEGLIWVIGPVLAVVFIICIVIAILLYKNKRKDSEPRTKCLLNNAEITPHHPKDPVEMRRINFQTPDSGLSSPLSDPEFDFESMLSHPPIPVSELAEHTEHLKANDNLKLSQEYESIDPGQQFTWEHSNLEVNKPKNRYANVIAYDHSRVILLPIEGIVGSDYINANYIDGYRKQNAYIATQGPLPETFGDFWRMVWEQRSATIVMMTKLEEKSRIKCDQYWPGRGTDTYGMIQVTLLDTIELATFCVRTFSLHKNGSSEKREVRQFQFTAWPDHGVPEYPTPFLAFLRRVKTCNPPDAGPIVVHCSAGVGRTGCFIVIDAMLERIKHEKTVDIYGHVTLMRSQRNYMVQTEDQYSFIHDALLEAVACGNTEVPARNLYTYIQKLAQIEVGEHVTGMELEFKRLANSKAHTSRFISANLPCNKFKNRLVNIMPYETTRVCLQPIRGVEGSDYINASFIDGYRQQKAYIATQGPLAETTEDFWRMLWEHNSTIVVMLTKLREMGREKCHQYWPAERSARYQYFVVDPMAEYNMPQYILREFKVTDARDGQSRTVRQFQFTDWPEQGVPKSGEGFIDFIGQVHKTKEQFGQDGPISVHCSAGVGRTGVFITLSIVLERMRYEGVVDIFQTVKMLRTQRPAMVQTEDEYQFCYQAALEYLGSFDHYAT</sequence>
<feature type="signal peptide" evidence="5">
    <location>
        <begin position="1"/>
        <end position="28"/>
    </location>
</feature>
<feature type="chain" id="PRO_5008954162" description="Receptor-type tyrosine-protein phosphatase S">
    <location>
        <begin position="29"/>
        <end position="1516"/>
    </location>
</feature>
<feature type="topological domain" description="Extracellular" evidence="5">
    <location>
        <begin position="29"/>
        <end position="854"/>
    </location>
</feature>
<feature type="transmembrane region" description="Helical" evidence="5">
    <location>
        <begin position="855"/>
        <end position="875"/>
    </location>
</feature>
<feature type="topological domain" description="Cytoplasmic" evidence="5">
    <location>
        <begin position="876"/>
        <end position="1516"/>
    </location>
</feature>
<feature type="domain" description="Ig-like C2-type 1" evidence="6">
    <location>
        <begin position="32"/>
        <end position="122"/>
    </location>
</feature>
<feature type="domain" description="Ig-like C2-type 2" evidence="6">
    <location>
        <begin position="134"/>
        <end position="223"/>
    </location>
</feature>
<feature type="domain" description="Ig-like C2-type 3" evidence="6">
    <location>
        <begin position="235"/>
        <end position="317"/>
    </location>
</feature>
<feature type="domain" description="Fibronectin type-III 1" evidence="8">
    <location>
        <begin position="324"/>
        <end position="414"/>
    </location>
</feature>
<feature type="domain" description="Fibronectin type-III 2" evidence="8">
    <location>
        <begin position="419"/>
        <end position="513"/>
    </location>
</feature>
<feature type="domain" description="Fibronectin type-III 3" evidence="8">
    <location>
        <begin position="517"/>
        <end position="606"/>
    </location>
</feature>
<feature type="domain" description="Fibronectin type-III 4" evidence="8">
    <location>
        <begin position="608"/>
        <end position="692"/>
    </location>
</feature>
<feature type="domain" description="Tyrosine-protein phosphatase 1" evidence="7">
    <location>
        <begin position="961"/>
        <end position="1216"/>
    </location>
</feature>
<feature type="domain" description="Tyrosine-protein phosphatase 2" evidence="7">
    <location>
        <begin position="1248"/>
        <end position="1507"/>
    </location>
</feature>
<feature type="region of interest" description="Important for binding to glycosaminoglycan chains" evidence="11">
    <location>
        <begin position="67"/>
        <end position="71"/>
    </location>
</feature>
<feature type="active site" description="Phosphocysteine intermediate" evidence="7">
    <location>
        <position position="1157"/>
    </location>
</feature>
<feature type="active site" description="Phosphocysteine intermediate" evidence="7">
    <location>
        <position position="1448"/>
    </location>
</feature>
<feature type="glycosylation site" description="N-linked (GlcNAc...) asparagine" evidence="9">
    <location>
        <position position="253"/>
    </location>
</feature>
<feature type="glycosylation site" description="N-linked (GlcNAc...) asparagine" evidence="9">
    <location>
        <position position="298"/>
    </location>
</feature>
<feature type="disulfide bond" evidence="6">
    <location>
        <begin position="53"/>
        <end position="106"/>
    </location>
</feature>
<feature type="disulfide bond" evidence="6">
    <location>
        <begin position="155"/>
        <end position="206"/>
    </location>
</feature>
<feature type="disulfide bond" evidence="6">
    <location>
        <begin position="256"/>
        <end position="301"/>
    </location>
</feature>
<feature type="splice variant" id="VSP_058832" description="In isoform 2.">
    <location>
        <begin position="226"/>
        <end position="229"/>
    </location>
</feature>
<feature type="splice variant" id="VSP_058833" description="In isoform 2.">
    <original>N</original>
    <variation>NKPDS</variation>
    <location>
        <position position="880"/>
    </location>
</feature>
<feature type="splice variant" id="VSP_058834" description="In isoform 2.">
    <original>DSGLSSPLSDPEFDFES</original>
    <variation>G</variation>
    <location>
        <begin position="918"/>
        <end position="934"/>
    </location>
</feature>
<feature type="mutagenesis site" description="Loss of heparin binding." evidence="11">
    <original>KKGKK</original>
    <variation>AAGAA</variation>
    <location>
        <begin position="67"/>
        <end position="71"/>
    </location>
</feature>
<feature type="mutagenesis site" description="Loss of heparin binding; when associated with A-99." evidence="11">
    <original>R</original>
    <variation>A</variation>
    <location>
        <position position="96"/>
    </location>
</feature>
<feature type="mutagenesis site" description="Loss of heparin binding; when associated with A-96." evidence="11">
    <original>R</original>
    <variation>A</variation>
    <location>
        <position position="99"/>
    </location>
</feature>
<feature type="sequence conflict" description="In Ref. 1; AAA64460." evidence="19" ref="1">
    <original>H</original>
    <variation>N</variation>
    <location>
        <position position="1339"/>
    </location>
</feature>
<feature type="sequence conflict" description="In Ref. 1; AAA64460." evidence="19" ref="1">
    <location>
        <position position="1487"/>
    </location>
</feature>
<feature type="strand" evidence="26">
    <location>
        <begin position="30"/>
        <end position="36"/>
    </location>
</feature>
<feature type="strand" evidence="26">
    <location>
        <begin position="41"/>
        <end position="44"/>
    </location>
</feature>
<feature type="strand" evidence="26">
    <location>
        <begin position="49"/>
        <end position="59"/>
    </location>
</feature>
<feature type="strand" evidence="26">
    <location>
        <begin position="62"/>
        <end position="67"/>
    </location>
</feature>
<feature type="strand" evidence="26">
    <location>
        <begin position="74"/>
        <end position="82"/>
    </location>
</feature>
<feature type="helix" evidence="26">
    <location>
        <begin position="83"/>
        <end position="85"/>
    </location>
</feature>
<feature type="strand" evidence="26">
    <location>
        <begin position="87"/>
        <end position="92"/>
    </location>
</feature>
<feature type="turn" evidence="26">
    <location>
        <begin position="97"/>
        <end position="100"/>
    </location>
</feature>
<feature type="strand" evidence="26">
    <location>
        <begin position="102"/>
        <end position="110"/>
    </location>
</feature>
<feature type="strand" evidence="26">
    <location>
        <begin position="113"/>
        <end position="124"/>
    </location>
</feature>
<feature type="helix" evidence="26">
    <location>
        <begin position="126"/>
        <end position="128"/>
    </location>
</feature>
<feature type="strand" evidence="26">
    <location>
        <begin position="135"/>
        <end position="138"/>
    </location>
</feature>
<feature type="strand" evidence="26">
    <location>
        <begin position="143"/>
        <end position="146"/>
    </location>
</feature>
<feature type="strand" evidence="26">
    <location>
        <begin position="151"/>
        <end position="153"/>
    </location>
</feature>
<feature type="strand" evidence="26">
    <location>
        <begin position="156"/>
        <end position="158"/>
    </location>
</feature>
<feature type="strand" evidence="26">
    <location>
        <begin position="164"/>
        <end position="169"/>
    </location>
</feature>
<feature type="helix" evidence="26">
    <location>
        <begin position="176"/>
        <end position="178"/>
    </location>
</feature>
<feature type="turn" evidence="26">
    <location>
        <begin position="179"/>
        <end position="181"/>
    </location>
</feature>
<feature type="strand" evidence="26">
    <location>
        <begin position="182"/>
        <end position="185"/>
    </location>
</feature>
<feature type="strand" evidence="27">
    <location>
        <begin position="187"/>
        <end position="189"/>
    </location>
</feature>
<feature type="strand" evidence="26">
    <location>
        <begin position="191"/>
        <end position="195"/>
    </location>
</feature>
<feature type="helix" evidence="26">
    <location>
        <begin position="198"/>
        <end position="200"/>
    </location>
</feature>
<feature type="strand" evidence="26">
    <location>
        <begin position="202"/>
        <end position="210"/>
    </location>
</feature>
<feature type="strand" evidence="26">
    <location>
        <begin position="213"/>
        <end position="216"/>
    </location>
</feature>
<feature type="strand" evidence="26">
    <location>
        <begin position="220"/>
        <end position="225"/>
    </location>
</feature>
<gene>
    <name type="primary">PTPRS</name>
</gene>
<reference evidence="21" key="1">
    <citation type="journal article" date="1994" name="Mech. Dev.">
        <title>Isoforms of a novel cell adhesion molecule-like protein tyrosine phosphatase are implicated in neural development.</title>
        <authorList>
            <person name="Stoker A.W."/>
        </authorList>
    </citation>
    <scope>NUCLEOTIDE SEQUENCE [MRNA] (ISOFORM 2)</scope>
    <scope>ALTERNATIVE SPLICING</scope>
    <scope>TISSUE SPECIFICITY</scope>
    <source>
        <tissue evidence="21">Embryonic brain</tissue>
    </source>
</reference>
<reference key="2">
    <citation type="journal article" date="2004" name="Nature">
        <title>Sequence and comparative analysis of the chicken genome provide unique perspectives on vertebrate evolution.</title>
        <authorList>
            <person name="Hillier L.W."/>
            <person name="Miller W."/>
            <person name="Birney E."/>
            <person name="Warren W."/>
            <person name="Hardison R.C."/>
            <person name="Ponting C.P."/>
            <person name="Bork P."/>
            <person name="Burt D.W."/>
            <person name="Groenen M.A.M."/>
            <person name="Delany M.E."/>
            <person name="Dodgson J.B."/>
            <person name="Chinwalla A.T."/>
            <person name="Cliften P.F."/>
            <person name="Clifton S.W."/>
            <person name="Delehaunty K.D."/>
            <person name="Fronick C."/>
            <person name="Fulton R.S."/>
            <person name="Graves T.A."/>
            <person name="Kremitzki C."/>
            <person name="Layman D."/>
            <person name="Magrini V."/>
            <person name="McPherson J.D."/>
            <person name="Miner T.L."/>
            <person name="Minx P."/>
            <person name="Nash W.E."/>
            <person name="Nhan M.N."/>
            <person name="Nelson J.O."/>
            <person name="Oddy L.G."/>
            <person name="Pohl C.S."/>
            <person name="Randall-Maher J."/>
            <person name="Smith S.M."/>
            <person name="Wallis J.W."/>
            <person name="Yang S.-P."/>
            <person name="Romanov M.N."/>
            <person name="Rondelli C.M."/>
            <person name="Paton B."/>
            <person name="Smith J."/>
            <person name="Morrice D."/>
            <person name="Daniels L."/>
            <person name="Tempest H.G."/>
            <person name="Robertson L."/>
            <person name="Masabanda J.S."/>
            <person name="Griffin D.K."/>
            <person name="Vignal A."/>
            <person name="Fillon V."/>
            <person name="Jacobbson L."/>
            <person name="Kerje S."/>
            <person name="Andersson L."/>
            <person name="Crooijmans R.P."/>
            <person name="Aerts J."/>
            <person name="van der Poel J.J."/>
            <person name="Ellegren H."/>
            <person name="Caldwell R.B."/>
            <person name="Hubbard S.J."/>
            <person name="Grafham D.V."/>
            <person name="Kierzek A.M."/>
            <person name="McLaren S.R."/>
            <person name="Overton I.M."/>
            <person name="Arakawa H."/>
            <person name="Beattie K.J."/>
            <person name="Bezzubov Y."/>
            <person name="Boardman P.E."/>
            <person name="Bonfield J.K."/>
            <person name="Croning M.D.R."/>
            <person name="Davies R.M."/>
            <person name="Francis M.D."/>
            <person name="Humphray S.J."/>
            <person name="Scott C.E."/>
            <person name="Taylor R.G."/>
            <person name="Tickle C."/>
            <person name="Brown W.R.A."/>
            <person name="Rogers J."/>
            <person name="Buerstedde J.-M."/>
            <person name="Wilson S.A."/>
            <person name="Stubbs L."/>
            <person name="Ovcharenko I."/>
            <person name="Gordon L."/>
            <person name="Lucas S."/>
            <person name="Miller M.M."/>
            <person name="Inoko H."/>
            <person name="Shiina T."/>
            <person name="Kaufman J."/>
            <person name="Salomonsen J."/>
            <person name="Skjoedt K."/>
            <person name="Wong G.K.-S."/>
            <person name="Wang J."/>
            <person name="Liu B."/>
            <person name="Wang J."/>
            <person name="Yu J."/>
            <person name="Yang H."/>
            <person name="Nefedov M."/>
            <person name="Koriabine M."/>
            <person name="Dejong P.J."/>
            <person name="Goodstadt L."/>
            <person name="Webber C."/>
            <person name="Dickens N.J."/>
            <person name="Letunic I."/>
            <person name="Suyama M."/>
            <person name="Torrents D."/>
            <person name="von Mering C."/>
            <person name="Zdobnov E.M."/>
            <person name="Makova K."/>
            <person name="Nekrutenko A."/>
            <person name="Elnitski L."/>
            <person name="Eswara P."/>
            <person name="King D.C."/>
            <person name="Yang S.-P."/>
            <person name="Tyekucheva S."/>
            <person name="Radakrishnan A."/>
            <person name="Harris R.S."/>
            <person name="Chiaromonte F."/>
            <person name="Taylor J."/>
            <person name="He J."/>
            <person name="Rijnkels M."/>
            <person name="Griffiths-Jones S."/>
            <person name="Ureta-Vidal A."/>
            <person name="Hoffman M.M."/>
            <person name="Severin J."/>
            <person name="Searle S.M.J."/>
            <person name="Law A.S."/>
            <person name="Speed D."/>
            <person name="Waddington D."/>
            <person name="Cheng Z."/>
            <person name="Tuzun E."/>
            <person name="Eichler E."/>
            <person name="Bao Z."/>
            <person name="Flicek P."/>
            <person name="Shteynberg D.D."/>
            <person name="Brent M.R."/>
            <person name="Bye J.M."/>
            <person name="Huckle E.J."/>
            <person name="Chatterji S."/>
            <person name="Dewey C."/>
            <person name="Pachter L."/>
            <person name="Kouranov A."/>
            <person name="Mourelatos Z."/>
            <person name="Hatzigeorgiou A.G."/>
            <person name="Paterson A.H."/>
            <person name="Ivarie R."/>
            <person name="Brandstrom M."/>
            <person name="Axelsson E."/>
            <person name="Backstrom N."/>
            <person name="Berlin S."/>
            <person name="Webster M.T."/>
            <person name="Pourquie O."/>
            <person name="Reymond A."/>
            <person name="Ucla C."/>
            <person name="Antonarakis S.E."/>
            <person name="Long M."/>
            <person name="Emerson J.J."/>
            <person name="Betran E."/>
            <person name="Dupanloup I."/>
            <person name="Kaessmann H."/>
            <person name="Hinrichs A.S."/>
            <person name="Bejerano G."/>
            <person name="Furey T.S."/>
            <person name="Harte R.A."/>
            <person name="Raney B."/>
            <person name="Siepel A."/>
            <person name="Kent W.J."/>
            <person name="Haussler D."/>
            <person name="Eyras E."/>
            <person name="Castelo R."/>
            <person name="Abril J.F."/>
            <person name="Castellano S."/>
            <person name="Camara F."/>
            <person name="Parra G."/>
            <person name="Guigo R."/>
            <person name="Bourque G."/>
            <person name="Tesler G."/>
            <person name="Pevzner P.A."/>
            <person name="Smit A."/>
            <person name="Fulton L.A."/>
            <person name="Mardis E.R."/>
            <person name="Wilson R.K."/>
        </authorList>
    </citation>
    <scope>NUCLEOTIDE SEQUENCE [LARGE SCALE GENOMIC DNA]</scope>
    <source>
        <strain>Red jungle fowl</strain>
    </source>
</reference>
<reference key="3">
    <citation type="journal article" date="1995" name="Development">
        <title>Axonal localisation of the CAM-like tyrosine phosphatase CRYP alpha: a signalling molecule of embryonic growth cones.</title>
        <authorList>
            <person name="Stoker A.W."/>
            <person name="Gehrig B."/>
            <person name="Haj F."/>
            <person name="Bay B.H."/>
        </authorList>
    </citation>
    <scope>ALTERNATIVE SPLICING</scope>
    <scope>SUBCELLULAR LOCATION</scope>
    <scope>TISSUE SPECIFICITY</scope>
</reference>
<reference key="4">
    <citation type="journal article" date="2002" name="Mol. Cell. Biol.">
        <title>Heparan sulfate proteoglycans are ligands for receptor protein tyrosine phosphatase sigma.</title>
        <authorList>
            <person name="Aricescu A.R."/>
            <person name="McKinnell I.W."/>
            <person name="Halfter W."/>
            <person name="Stoker A.W."/>
        </authorList>
    </citation>
    <scope>FUNCTION</scope>
    <scope>INTERACTION WITH AGRN AND COL18A1</scope>
    <scope>TISSUE SPECIFICITY</scope>
    <scope>MUTAGENESIS OF 67-LYS--LYS-71; ARG-96 AND ARG-99</scope>
</reference>
<reference key="5">
    <citation type="journal article" date="2007" name="Biochim. Biophys. Acta">
        <title>PTPsigma binds and dephosphorylates neurotrophin receptors and can suppress NGF-dependent neurite outgrowth from sensory neurons.</title>
        <authorList>
            <person name="Faux C."/>
            <person name="Hawadle M."/>
            <person name="Nixon J."/>
            <person name="Wallace A."/>
            <person name="Lee S."/>
            <person name="Murray S."/>
            <person name="Stoker A."/>
        </authorList>
    </citation>
    <scope>FUNCTION</scope>
    <scope>INTERACTION WITH NTRK1 AND NTRK3</scope>
    <scope>SUBCELLULAR LOCATION</scope>
</reference>
<reference key="6">
    <citation type="journal article" date="2007" name="Mol. Cell. Biol.">
        <title>Dimerization of protein tyrosine phosphatase sigma governs both ligand binding and isoform specificity.</title>
        <authorList>
            <person name="Lee S."/>
            <person name="Faux C."/>
            <person name="Nixon J."/>
            <person name="Alete D."/>
            <person name="Chilton J."/>
            <person name="Hawadle M."/>
            <person name="Stoker A.W."/>
        </authorList>
    </citation>
    <scope>SUBUNIT</scope>
    <scope>SUBCELLULAR LOCATION</scope>
    <scope>FUNCTION</scope>
</reference>
<reference evidence="23" key="7">
    <citation type="journal article" date="2011" name="Science">
        <title>Proteoglycan-specific molecular switch for RPTPsigma clustering and neuronal extension.</title>
        <authorList>
            <person name="Coles C.H."/>
            <person name="Shen Y."/>
            <person name="Tenney A.P."/>
            <person name="Siebold C."/>
            <person name="Sutton G.C."/>
            <person name="Lu W."/>
            <person name="Gallagher J.T."/>
            <person name="Jones E.Y."/>
            <person name="Flanagan J.G."/>
            <person name="Aricescu A.R."/>
        </authorList>
    </citation>
    <scope>X-RAY CRYSTALLOGRAPHY (1.65 ANGSTROMS) OF 29-226</scope>
    <scope>DISULFIDE BONDS</scope>
</reference>
<reference evidence="24 25" key="8">
    <citation type="journal article" date="2014" name="Nat. Commun.">
        <title>Structural basis for extracellular cis and trans RPTPsigma signal competition in synaptogenesis.</title>
        <authorList>
            <person name="Coles C.H."/>
            <person name="Mitakidis N."/>
            <person name="Zhang P."/>
            <person name="Elegheert J."/>
            <person name="Lu W."/>
            <person name="Stoker A.W."/>
            <person name="Nakagawa T."/>
            <person name="Craig A.M."/>
            <person name="Jones E.Y."/>
            <person name="Aricescu A.R."/>
        </authorList>
    </citation>
    <scope>X-RAY CRYSTALLOGRAPHY (2.50 ANGSTROMS) OF 29-316 IN COMPLEX WITH NTRK3</scope>
    <scope>INTERACTION WITH NTRK3</scope>
    <scope>DISULFIDE BONDS</scope>
</reference>
<proteinExistence type="evidence at protein level"/>
<dbReference type="EC" id="3.1.3.48" evidence="2"/>
<dbReference type="EMBL" id="L32780">
    <property type="protein sequence ID" value="AAA64460.1"/>
    <property type="molecule type" value="mRNA"/>
</dbReference>
<dbReference type="EMBL" id="AADN04000371">
    <property type="status" value="NOT_ANNOTATED_CDS"/>
    <property type="molecule type" value="Genomic_DNA"/>
</dbReference>
<dbReference type="PIR" id="I50212">
    <property type="entry name" value="I50212"/>
</dbReference>
<dbReference type="RefSeq" id="NP_990738.1">
    <property type="nucleotide sequence ID" value="NM_205407.1"/>
</dbReference>
<dbReference type="PDB" id="2YD4">
    <property type="method" value="X-ray"/>
    <property type="resolution" value="1.65 A"/>
    <property type="chains" value="A=29-226"/>
</dbReference>
<dbReference type="PDB" id="4PBV">
    <property type="method" value="X-ray"/>
    <property type="resolution" value="2.50 A"/>
    <property type="chains" value="C/D/E=29-320"/>
</dbReference>
<dbReference type="PDB" id="4PBW">
    <property type="method" value="X-ray"/>
    <property type="resolution" value="3.05 A"/>
    <property type="chains" value="D/E/F=29-320"/>
</dbReference>
<dbReference type="PDBsum" id="2YD4"/>
<dbReference type="PDBsum" id="4PBV"/>
<dbReference type="PDBsum" id="4PBW"/>
<dbReference type="SMR" id="F1NWE3"/>
<dbReference type="FunCoup" id="F1NWE3">
    <property type="interactions" value="1054"/>
</dbReference>
<dbReference type="STRING" id="9031.ENSGALP00000056093"/>
<dbReference type="GlyCosmos" id="F1NWE3">
    <property type="glycosylation" value="2 sites, No reported glycans"/>
</dbReference>
<dbReference type="GlyGen" id="F1NWE3">
    <property type="glycosylation" value="2 sites"/>
</dbReference>
<dbReference type="PaxDb" id="9031-ENSGALP00000006433"/>
<dbReference type="GeneID" id="396375"/>
<dbReference type="KEGG" id="gga:396375"/>
<dbReference type="CTD" id="5802"/>
<dbReference type="VEuPathDB" id="HostDB:geneid_396375"/>
<dbReference type="eggNOG" id="KOG4228">
    <property type="taxonomic scope" value="Eukaryota"/>
</dbReference>
<dbReference type="HOGENOM" id="CLU_001645_0_1_1"/>
<dbReference type="InParanoid" id="F1NWE3"/>
<dbReference type="OrthoDB" id="10253954at2759"/>
<dbReference type="EvolutionaryTrace" id="F1NWE3"/>
<dbReference type="PRO" id="PR:F1NWE3"/>
<dbReference type="Proteomes" id="UP000000539">
    <property type="component" value="Unassembled WGS sequence"/>
</dbReference>
<dbReference type="GO" id="GO:0030424">
    <property type="term" value="C:axon"/>
    <property type="evidence" value="ECO:0000314"/>
    <property type="project" value="UniProtKB"/>
</dbReference>
<dbReference type="GO" id="GO:0030426">
    <property type="term" value="C:growth cone"/>
    <property type="evidence" value="ECO:0007669"/>
    <property type="project" value="UniProtKB-SubCell"/>
</dbReference>
<dbReference type="GO" id="GO:0043204">
    <property type="term" value="C:perikaryon"/>
    <property type="evidence" value="ECO:0007669"/>
    <property type="project" value="UniProtKB-SubCell"/>
</dbReference>
<dbReference type="GO" id="GO:0005886">
    <property type="term" value="C:plasma membrane"/>
    <property type="evidence" value="ECO:0000314"/>
    <property type="project" value="UniProtKB"/>
</dbReference>
<dbReference type="GO" id="GO:0098839">
    <property type="term" value="C:postsynaptic density membrane"/>
    <property type="evidence" value="ECO:0000250"/>
    <property type="project" value="UniProtKB"/>
</dbReference>
<dbReference type="GO" id="GO:0030672">
    <property type="term" value="C:synaptic vesicle membrane"/>
    <property type="evidence" value="ECO:0000250"/>
    <property type="project" value="UniProtKB"/>
</dbReference>
<dbReference type="GO" id="GO:0043395">
    <property type="term" value="F:heparan sulfate proteoglycan binding"/>
    <property type="evidence" value="ECO:0000314"/>
    <property type="project" value="UniProtKB"/>
</dbReference>
<dbReference type="GO" id="GO:0008201">
    <property type="term" value="F:heparin binding"/>
    <property type="evidence" value="ECO:0000314"/>
    <property type="project" value="UniProtKB"/>
</dbReference>
<dbReference type="GO" id="GO:0042803">
    <property type="term" value="F:protein homodimerization activity"/>
    <property type="evidence" value="ECO:0000314"/>
    <property type="project" value="UniProtKB"/>
</dbReference>
<dbReference type="GO" id="GO:0004725">
    <property type="term" value="F:protein tyrosine phosphatase activity"/>
    <property type="evidence" value="ECO:0000250"/>
    <property type="project" value="UniProtKB"/>
</dbReference>
<dbReference type="GO" id="GO:0030517">
    <property type="term" value="P:negative regulation of axon extension"/>
    <property type="evidence" value="ECO:0000250"/>
    <property type="project" value="UniProtKB"/>
</dbReference>
<dbReference type="GO" id="GO:0048681">
    <property type="term" value="P:negative regulation of axon regeneration"/>
    <property type="evidence" value="ECO:0000250"/>
    <property type="project" value="UniProtKB"/>
</dbReference>
<dbReference type="GO" id="GO:0048671">
    <property type="term" value="P:negative regulation of collateral sprouting"/>
    <property type="evidence" value="ECO:0000250"/>
    <property type="project" value="UniProtKB"/>
</dbReference>
<dbReference type="GO" id="GO:0061000">
    <property type="term" value="P:negative regulation of dendritic spine development"/>
    <property type="evidence" value="ECO:0000250"/>
    <property type="project" value="UniProtKB"/>
</dbReference>
<dbReference type="GO" id="GO:0035335">
    <property type="term" value="P:peptidyl-tyrosine dephosphorylation"/>
    <property type="evidence" value="ECO:0000250"/>
    <property type="project" value="UniProtKB"/>
</dbReference>
<dbReference type="GO" id="GO:0007165">
    <property type="term" value="P:signal transduction"/>
    <property type="evidence" value="ECO:0000318"/>
    <property type="project" value="GO_Central"/>
</dbReference>
<dbReference type="GO" id="GO:0099560">
    <property type="term" value="P:synaptic membrane adhesion"/>
    <property type="evidence" value="ECO:0000318"/>
    <property type="project" value="GO_Central"/>
</dbReference>
<dbReference type="CDD" id="cd00063">
    <property type="entry name" value="FN3"/>
    <property type="match status" value="4"/>
</dbReference>
<dbReference type="CDD" id="cd05738">
    <property type="entry name" value="IgI_2_RPTP_IIa_LAR_like"/>
    <property type="match status" value="1"/>
</dbReference>
<dbReference type="CDD" id="cd05739">
    <property type="entry name" value="IgI_3_RPTP_IIa_LAR_like"/>
    <property type="match status" value="1"/>
</dbReference>
<dbReference type="CDD" id="cd14627">
    <property type="entry name" value="R-PTP-S-2"/>
    <property type="match status" value="1"/>
</dbReference>
<dbReference type="CDD" id="cd14625">
    <property type="entry name" value="R-PTPc-S-1"/>
    <property type="match status" value="1"/>
</dbReference>
<dbReference type="FunFam" id="2.60.40.10:FF:000010">
    <property type="entry name" value="receptor-type tyrosine-protein phosphatase delta isoform X1"/>
    <property type="match status" value="1"/>
</dbReference>
<dbReference type="FunFam" id="2.60.40.10:FF:000027">
    <property type="entry name" value="receptor-type tyrosine-protein phosphatase delta isoform X1"/>
    <property type="match status" value="1"/>
</dbReference>
<dbReference type="FunFam" id="2.60.40.10:FF:000036">
    <property type="entry name" value="receptor-type tyrosine-protein phosphatase delta isoform X1"/>
    <property type="match status" value="1"/>
</dbReference>
<dbReference type="FunFam" id="2.60.40.10:FF:000068">
    <property type="entry name" value="receptor-type tyrosine-protein phosphatase delta isoform X1"/>
    <property type="match status" value="1"/>
</dbReference>
<dbReference type="FunFam" id="2.60.40.10:FF:000144">
    <property type="entry name" value="receptor-type tyrosine-protein phosphatase delta isoform X1"/>
    <property type="match status" value="1"/>
</dbReference>
<dbReference type="FunFam" id="2.60.40.10:FF:000015">
    <property type="entry name" value="receptor-type tyrosine-protein phosphatase delta isoform X2"/>
    <property type="match status" value="1"/>
</dbReference>
<dbReference type="FunFam" id="2.60.40.10:FF:000023">
    <property type="entry name" value="receptor-type tyrosine-protein phosphatase delta isoform X2"/>
    <property type="match status" value="1"/>
</dbReference>
<dbReference type="FunFam" id="3.90.190.10:FF:000002">
    <property type="entry name" value="receptor-type tyrosine-protein phosphatase delta isoform X2"/>
    <property type="match status" value="1"/>
</dbReference>
<dbReference type="FunFam" id="3.90.190.10:FF:000001">
    <property type="entry name" value="Receptor-type tyrosine-protein phosphatase F isoform A"/>
    <property type="match status" value="1"/>
</dbReference>
<dbReference type="Gene3D" id="2.60.40.10">
    <property type="entry name" value="Immunoglobulins"/>
    <property type="match status" value="7"/>
</dbReference>
<dbReference type="Gene3D" id="3.90.190.10">
    <property type="entry name" value="Protein tyrosine phosphatase superfamily"/>
    <property type="match status" value="2"/>
</dbReference>
<dbReference type="InterPro" id="IPR003961">
    <property type="entry name" value="FN3_dom"/>
</dbReference>
<dbReference type="InterPro" id="IPR036116">
    <property type="entry name" value="FN3_sf"/>
</dbReference>
<dbReference type="InterPro" id="IPR007110">
    <property type="entry name" value="Ig-like_dom"/>
</dbReference>
<dbReference type="InterPro" id="IPR036179">
    <property type="entry name" value="Ig-like_dom_sf"/>
</dbReference>
<dbReference type="InterPro" id="IPR013783">
    <property type="entry name" value="Ig-like_fold"/>
</dbReference>
<dbReference type="InterPro" id="IPR013098">
    <property type="entry name" value="Ig_I-set"/>
</dbReference>
<dbReference type="InterPro" id="IPR003599">
    <property type="entry name" value="Ig_sub"/>
</dbReference>
<dbReference type="InterPro" id="IPR003598">
    <property type="entry name" value="Ig_sub2"/>
</dbReference>
<dbReference type="InterPro" id="IPR029021">
    <property type="entry name" value="Prot-tyrosine_phosphatase-like"/>
</dbReference>
<dbReference type="InterPro" id="IPR000242">
    <property type="entry name" value="PTP_cat"/>
</dbReference>
<dbReference type="InterPro" id="IPR050713">
    <property type="entry name" value="RTP_Phos/Ushers"/>
</dbReference>
<dbReference type="InterPro" id="IPR016130">
    <property type="entry name" value="Tyr_Pase_AS"/>
</dbReference>
<dbReference type="InterPro" id="IPR003595">
    <property type="entry name" value="Tyr_Pase_cat"/>
</dbReference>
<dbReference type="InterPro" id="IPR000387">
    <property type="entry name" value="Tyr_Pase_dom"/>
</dbReference>
<dbReference type="PANTHER" id="PTHR46957">
    <property type="entry name" value="CYTOKINE RECEPTOR"/>
    <property type="match status" value="1"/>
</dbReference>
<dbReference type="PANTHER" id="PTHR46957:SF6">
    <property type="entry name" value="PROTEIN-TYROSINE-PHOSPHATASE"/>
    <property type="match status" value="1"/>
</dbReference>
<dbReference type="Pfam" id="PF00041">
    <property type="entry name" value="fn3"/>
    <property type="match status" value="4"/>
</dbReference>
<dbReference type="Pfam" id="PF07679">
    <property type="entry name" value="I-set"/>
    <property type="match status" value="2"/>
</dbReference>
<dbReference type="Pfam" id="PF13927">
    <property type="entry name" value="Ig_3"/>
    <property type="match status" value="1"/>
</dbReference>
<dbReference type="Pfam" id="PF00102">
    <property type="entry name" value="Y_phosphatase"/>
    <property type="match status" value="2"/>
</dbReference>
<dbReference type="PRINTS" id="PR00014">
    <property type="entry name" value="FNTYPEIII"/>
</dbReference>
<dbReference type="PRINTS" id="PR00700">
    <property type="entry name" value="PRTYPHPHTASE"/>
</dbReference>
<dbReference type="SMART" id="SM00060">
    <property type="entry name" value="FN3"/>
    <property type="match status" value="4"/>
</dbReference>
<dbReference type="SMART" id="SM00409">
    <property type="entry name" value="IG"/>
    <property type="match status" value="3"/>
</dbReference>
<dbReference type="SMART" id="SM00408">
    <property type="entry name" value="IGc2"/>
    <property type="match status" value="3"/>
</dbReference>
<dbReference type="SMART" id="SM00194">
    <property type="entry name" value="PTPc"/>
    <property type="match status" value="2"/>
</dbReference>
<dbReference type="SMART" id="SM00404">
    <property type="entry name" value="PTPc_motif"/>
    <property type="match status" value="2"/>
</dbReference>
<dbReference type="SUPFAM" id="SSF52799">
    <property type="entry name" value="(Phosphotyrosine protein) phosphatases II"/>
    <property type="match status" value="2"/>
</dbReference>
<dbReference type="SUPFAM" id="SSF49265">
    <property type="entry name" value="Fibronectin type III"/>
    <property type="match status" value="2"/>
</dbReference>
<dbReference type="SUPFAM" id="SSF48726">
    <property type="entry name" value="Immunoglobulin"/>
    <property type="match status" value="3"/>
</dbReference>
<dbReference type="PROSITE" id="PS50853">
    <property type="entry name" value="FN3"/>
    <property type="match status" value="4"/>
</dbReference>
<dbReference type="PROSITE" id="PS50835">
    <property type="entry name" value="IG_LIKE"/>
    <property type="match status" value="3"/>
</dbReference>
<dbReference type="PROSITE" id="PS00383">
    <property type="entry name" value="TYR_PHOSPHATASE_1"/>
    <property type="match status" value="2"/>
</dbReference>
<dbReference type="PROSITE" id="PS50056">
    <property type="entry name" value="TYR_PHOSPHATASE_2"/>
    <property type="match status" value="2"/>
</dbReference>
<dbReference type="PROSITE" id="PS50055">
    <property type="entry name" value="TYR_PHOSPHATASE_PTP"/>
    <property type="match status" value="2"/>
</dbReference>
<organism evidence="22">
    <name type="scientific">Gallus gallus</name>
    <name type="common">Chicken</name>
    <dbReference type="NCBI Taxonomy" id="9031"/>
    <lineage>
        <taxon>Eukaryota</taxon>
        <taxon>Metazoa</taxon>
        <taxon>Chordata</taxon>
        <taxon>Craniata</taxon>
        <taxon>Vertebrata</taxon>
        <taxon>Euteleostomi</taxon>
        <taxon>Archelosauria</taxon>
        <taxon>Archosauria</taxon>
        <taxon>Dinosauria</taxon>
        <taxon>Saurischia</taxon>
        <taxon>Theropoda</taxon>
        <taxon>Coelurosauria</taxon>
        <taxon>Aves</taxon>
        <taxon>Neognathae</taxon>
        <taxon>Galloanserae</taxon>
        <taxon>Galliformes</taxon>
        <taxon>Phasianidae</taxon>
        <taxon>Phasianinae</taxon>
        <taxon>Gallus</taxon>
    </lineage>
</organism>
<accession>F1NWE3</accession>
<accession>Q90815</accession>
<name>PTPRS_CHICK</name>
<evidence type="ECO:0000250" key="1"/>
<evidence type="ECO:0000250" key="2">
    <source>
        <dbReference type="UniProtKB" id="B0V2N1"/>
    </source>
</evidence>
<evidence type="ECO:0000250" key="3">
    <source>
        <dbReference type="UniProtKB" id="Q13332"/>
    </source>
</evidence>
<evidence type="ECO:0000250" key="4">
    <source>
        <dbReference type="UniProtKB" id="Q64605"/>
    </source>
</evidence>
<evidence type="ECO:0000255" key="5"/>
<evidence type="ECO:0000255" key="6">
    <source>
        <dbReference type="PROSITE-ProRule" id="PRU00114"/>
    </source>
</evidence>
<evidence type="ECO:0000255" key="7">
    <source>
        <dbReference type="PROSITE-ProRule" id="PRU00160"/>
    </source>
</evidence>
<evidence type="ECO:0000255" key="8">
    <source>
        <dbReference type="PROSITE-ProRule" id="PRU00316"/>
    </source>
</evidence>
<evidence type="ECO:0000255" key="9">
    <source>
        <dbReference type="PROSITE-ProRule" id="PRU00498"/>
    </source>
</evidence>
<evidence type="ECO:0000255" key="10">
    <source>
        <dbReference type="PROSITE-ProRule" id="PRU10044"/>
    </source>
</evidence>
<evidence type="ECO:0000269" key="11">
    <source>
    </source>
</evidence>
<evidence type="ECO:0000269" key="12">
    <source>
    </source>
</evidence>
<evidence type="ECO:0000269" key="13">
    <source>
    </source>
</evidence>
<evidence type="ECO:0000269" key="14">
    <source>
    </source>
</evidence>
<evidence type="ECO:0000269" key="15">
    <source>
    </source>
</evidence>
<evidence type="ECO:0000269" key="16">
    <source>
    </source>
</evidence>
<evidence type="ECO:0000303" key="17">
    <source>
    </source>
</evidence>
<evidence type="ECO:0000303" key="18">
    <source>
    </source>
</evidence>
<evidence type="ECO:0000305" key="19"/>
<evidence type="ECO:0000305" key="20">
    <source>
    </source>
</evidence>
<evidence type="ECO:0000312" key="21">
    <source>
        <dbReference type="EMBL" id="AAA64460.1"/>
    </source>
</evidence>
<evidence type="ECO:0000312" key="22">
    <source>
        <dbReference type="Proteomes" id="UP000000539"/>
    </source>
</evidence>
<evidence type="ECO:0007744" key="23">
    <source>
        <dbReference type="PDB" id="2YD4"/>
    </source>
</evidence>
<evidence type="ECO:0007744" key="24">
    <source>
        <dbReference type="PDB" id="4PBV"/>
    </source>
</evidence>
<evidence type="ECO:0007744" key="25">
    <source>
        <dbReference type="PDB" id="4PBW"/>
    </source>
</evidence>
<evidence type="ECO:0007829" key="26">
    <source>
        <dbReference type="PDB" id="2YD4"/>
    </source>
</evidence>
<evidence type="ECO:0007829" key="27">
    <source>
        <dbReference type="PDB" id="4PBW"/>
    </source>
</evidence>
<keyword id="KW-0002">3D-structure</keyword>
<keyword id="KW-0025">Alternative splicing</keyword>
<keyword id="KW-1003">Cell membrane</keyword>
<keyword id="KW-0966">Cell projection</keyword>
<keyword id="KW-0968">Cytoplasmic vesicle</keyword>
<keyword id="KW-1015">Disulfide bond</keyword>
<keyword id="KW-0325">Glycoprotein</keyword>
<keyword id="KW-0358">Heparin-binding</keyword>
<keyword id="KW-0378">Hydrolase</keyword>
<keyword id="KW-0393">Immunoglobulin domain</keyword>
<keyword id="KW-0472">Membrane</keyword>
<keyword id="KW-0904">Protein phosphatase</keyword>
<keyword id="KW-0675">Receptor</keyword>
<keyword id="KW-1185">Reference proteome</keyword>
<keyword id="KW-0677">Repeat</keyword>
<keyword id="KW-0732">Signal</keyword>
<keyword id="KW-0770">Synapse</keyword>
<keyword id="KW-0771">Synaptosome</keyword>
<keyword id="KW-0812">Transmembrane</keyword>
<keyword id="KW-1133">Transmembrane helix</keyword>
<protein>
    <recommendedName>
        <fullName>Receptor-type tyrosine-protein phosphatase S</fullName>
        <shortName>R-PTP-S</shortName>
        <ecNumber evidence="2">3.1.3.48</ecNumber>
    </recommendedName>
    <alternativeName>
        <fullName evidence="18">Chick receptor tyrosine phosphatase alpha</fullName>
        <shortName evidence="17">CRYP alpha</shortName>
        <shortName evidence="18">CRYPalpha</shortName>
    </alternativeName>
</protein>
<comment type="function">
    <text evidence="2 11 12 13">Cell surface receptor that binds to glycosaminoglycans, including chondroitin sulfate proteoglycans and heparan sulfate proteoglycans (PubMed:11865065, PubMed:17178832). Binding to chondroitin sulfate and heparan sulfate proteoglycans has opposite effects on PTPRS oligomerization and regulation of neurite outgrowth (By similarity). Contributes to the inhibition of neurite and axonal outgrowth by chondroitin sulfate proteoglycans, also after nerve transection (PubMed:17967490). Plays a role in stimulating neurite outgrowth in response to the heparan sulfate proteoglycan GPC2. Required for normal brain development, especially for normal development of the pituitary gland and the olfactory bulb. Functions as tyrosine phosphatase (PubMed:17967490). Mediates dephosphorylation of NTRK1, NTRK2 and NTRK3 (PubMed:17967490). Plays a role in down-regulation of signaling cascades that lead to the activation of Akt and MAP kinases. Down-regulates TLR9-mediated activation of NF-kappa-B, as well as production of TNF, interferon alpha and interferon beta (By similarity).</text>
</comment>
<comment type="catalytic activity">
    <reaction evidence="10">
        <text>O-phospho-L-tyrosyl-[protein] + H2O = L-tyrosyl-[protein] + phosphate</text>
        <dbReference type="Rhea" id="RHEA:10684"/>
        <dbReference type="Rhea" id="RHEA-COMP:10136"/>
        <dbReference type="Rhea" id="RHEA-COMP:20101"/>
        <dbReference type="ChEBI" id="CHEBI:15377"/>
        <dbReference type="ChEBI" id="CHEBI:43474"/>
        <dbReference type="ChEBI" id="CHEBI:46858"/>
        <dbReference type="ChEBI" id="CHEBI:61978"/>
        <dbReference type="EC" id="3.1.3.48"/>
    </reaction>
</comment>
<comment type="subunit">
    <text evidence="2 3 11 12 13 14">Homodimer (PubMed:17178832). Binding to large heparan sulfate proteoglycan structures promotes oligomerization. Binding to chondroitin sulfate proteoglycan does not lead to oligomerization (By similarity). Interacts (via Ig-like domains) with NTRK1 and NTRK3, but does not form detectable complexes with NTRK2 (PubMed:17967490, PubMed:25385546). Interacts (via extracellular domain) with the heparan sulfate proteoglycans AGRN and COL18A1 (PubMed:11865065).</text>
</comment>
<comment type="subcellular location">
    <subcellularLocation>
        <location evidence="12 20">Cell membrane</location>
        <topology evidence="20">Single-pass type I membrane protein</topology>
    </subcellularLocation>
    <subcellularLocation>
        <location evidence="15">Cell projection</location>
        <location evidence="15">Axon</location>
    </subcellularLocation>
    <subcellularLocation>
        <location evidence="2">Perikaryon</location>
    </subcellularLocation>
    <subcellularLocation>
        <location evidence="4">Cytoplasmic vesicle</location>
        <location evidence="4">Secretory vesicle</location>
        <location evidence="4">Synaptic vesicle membrane</location>
    </subcellularLocation>
    <subcellularLocation>
        <location evidence="4">Synapse</location>
        <location evidence="4">Synaptosome</location>
    </subcellularLocation>
    <subcellularLocation>
        <location evidence="4">Postsynaptic density</location>
    </subcellularLocation>
    <subcellularLocation>
        <location evidence="2">Cell projection</location>
        <location evidence="2">Neuron projection</location>
    </subcellularLocation>
    <subcellularLocation>
        <location evidence="2">Cell projection</location>
        <location evidence="2">Growth cone</location>
    </subcellularLocation>
    <text evidence="15">Detected along neurites and at axon growth cones.</text>
</comment>
<comment type="alternative products">
    <event type="alternative splicing"/>
    <isoform>
        <id>F1NWE3-1</id>
        <name>1</name>
        <sequence type="displayed"/>
    </isoform>
    <isoform>
        <id>F1NWE3-2</id>
        <name>2</name>
        <name evidence="18">CRYPalpha1</name>
        <sequence type="described" ref="VSP_058832 VSP_058833 VSP_058834"/>
    </isoform>
</comment>
<comment type="tissue specificity">
    <text evidence="11 15 16">Detected in embryonic brain, dorsal root ganglion and spinal cord (PubMed:7600997). Detected in embryonic retina (at protein level) (PubMed:11865065). Detected in embryonic brain, spinal cord, dorsal root ganglion, trigeminal ganglion, ganglia associated with the precardinal vein and vagus nerve, the inner and outer nuclear layer of the retina, limb, breast muscle, heart, gut and lung.</text>
</comment>
<comment type="PTM">
    <text evidence="1">A cleavage occurs, separating the extracellular domain from the transmembrane segment. This process called 'ectodomain shedding' is thought to be involved in receptor desensitization, signal transduction and/or membrane localization (By similarity).</text>
</comment>
<comment type="similarity">
    <text evidence="19">Belongs to the protein-tyrosine phosphatase family. Receptor class 2A subfamily.</text>
</comment>